<geneLocation type="chloroplast"/>
<gene>
    <name type="primary">rpl2</name>
</gene>
<keyword id="KW-0150">Chloroplast</keyword>
<keyword id="KW-0934">Plastid</keyword>
<keyword id="KW-0687">Ribonucleoprotein</keyword>
<keyword id="KW-0689">Ribosomal protein</keyword>
<sequence length="275" mass="30663">MGIRFLKAFTPGTRNRSVSDFSEITTTKREKSLSKMNHRSKGRNNRGVITCRHKGGGHKRLYREIDFRRDKIGIPGKVMTIEYDPNRNARIALVMYEDGEKRYILQPNGLRVGDSIISDLQAPILVGNALPLRNIPLGAQVHNVEFQPGSGGQLARSAGALLDILAKEGNFVTVRLPSKEIRLISKNSWATIGQVGNLEAYSIRIGKAGRNRWLGKRPTVRGSVMNPNDHPHGGGEGRAPIGRCRPVTPWGRPALGQFTRQPKKYSSKFILRKRK</sequence>
<evidence type="ECO:0000250" key="1"/>
<evidence type="ECO:0000255" key="2">
    <source>
        <dbReference type="HAMAP-Rule" id="MF_01320"/>
    </source>
</evidence>
<evidence type="ECO:0000256" key="3">
    <source>
        <dbReference type="SAM" id="MobiDB-lite"/>
    </source>
</evidence>
<evidence type="ECO:0000305" key="4"/>
<comment type="subunit">
    <text evidence="1">Part of the 50S ribosomal subunit.</text>
</comment>
<comment type="subcellular location">
    <subcellularLocation>
        <location>Plastid</location>
        <location>Chloroplast</location>
    </subcellularLocation>
</comment>
<comment type="similarity">
    <text evidence="4">Belongs to the universal ribosomal protein uL2 family.</text>
</comment>
<protein>
    <recommendedName>
        <fullName evidence="2">Large ribosomal subunit protein uL2c</fullName>
    </recommendedName>
    <alternativeName>
        <fullName evidence="4">50S ribosomal protein L2, chloroplastic</fullName>
    </alternativeName>
</protein>
<name>RK2_TETOB</name>
<feature type="chain" id="PRO_0000277100" description="Large ribosomal subunit protein uL2c">
    <location>
        <begin position="1"/>
        <end position="275"/>
    </location>
</feature>
<feature type="region of interest" description="Disordered" evidence="3">
    <location>
        <begin position="32"/>
        <end position="53"/>
    </location>
</feature>
<feature type="region of interest" description="Disordered" evidence="3">
    <location>
        <begin position="218"/>
        <end position="242"/>
    </location>
</feature>
<proteinExistence type="inferred from homology"/>
<organism>
    <name type="scientific">Tetradesmus obliquus</name>
    <name type="common">Green alga</name>
    <name type="synonym">Acutodesmus obliquus</name>
    <dbReference type="NCBI Taxonomy" id="3088"/>
    <lineage>
        <taxon>Eukaryota</taxon>
        <taxon>Viridiplantae</taxon>
        <taxon>Chlorophyta</taxon>
        <taxon>core chlorophytes</taxon>
        <taxon>Chlorophyceae</taxon>
        <taxon>CS clade</taxon>
        <taxon>Sphaeropleales</taxon>
        <taxon>Scenedesmaceae</taxon>
        <taxon>Tetradesmus</taxon>
    </lineage>
</organism>
<reference key="1">
    <citation type="journal article" date="2006" name="BMC Evol. Biol.">
        <title>The complete chloroplast genome sequence of the chlorophycean green alga Scenedesmus obliquus reveals a compact gene organization and a biased distribution of genes on the two DNA strands.</title>
        <authorList>
            <person name="de Cambiaire J.-C."/>
            <person name="Otis C."/>
            <person name="Lemieux C."/>
            <person name="Turmel M."/>
        </authorList>
    </citation>
    <scope>NUCLEOTIDE SEQUENCE [LARGE SCALE GENOMIC DNA]</scope>
    <source>
        <strain>UTEX 393</strain>
    </source>
</reference>
<accession>Q1KVT7</accession>
<dbReference type="EMBL" id="DQ396875">
    <property type="protein sequence ID" value="ABD48270.1"/>
    <property type="molecule type" value="Genomic_DNA"/>
</dbReference>
<dbReference type="RefSeq" id="YP_635987.1">
    <property type="nucleotide sequence ID" value="NC_008101.1"/>
</dbReference>
<dbReference type="SMR" id="Q1KVT7"/>
<dbReference type="GeneID" id="4099803"/>
<dbReference type="GO" id="GO:0009507">
    <property type="term" value="C:chloroplast"/>
    <property type="evidence" value="ECO:0007669"/>
    <property type="project" value="UniProtKB-SubCell"/>
</dbReference>
<dbReference type="GO" id="GO:0005762">
    <property type="term" value="C:mitochondrial large ribosomal subunit"/>
    <property type="evidence" value="ECO:0007669"/>
    <property type="project" value="TreeGrafter"/>
</dbReference>
<dbReference type="GO" id="GO:0019843">
    <property type="term" value="F:rRNA binding"/>
    <property type="evidence" value="ECO:0007669"/>
    <property type="project" value="UniProtKB-UniRule"/>
</dbReference>
<dbReference type="GO" id="GO:0003735">
    <property type="term" value="F:structural constituent of ribosome"/>
    <property type="evidence" value="ECO:0007669"/>
    <property type="project" value="InterPro"/>
</dbReference>
<dbReference type="GO" id="GO:0016740">
    <property type="term" value="F:transferase activity"/>
    <property type="evidence" value="ECO:0007669"/>
    <property type="project" value="InterPro"/>
</dbReference>
<dbReference type="GO" id="GO:0032543">
    <property type="term" value="P:mitochondrial translation"/>
    <property type="evidence" value="ECO:0007669"/>
    <property type="project" value="TreeGrafter"/>
</dbReference>
<dbReference type="FunFam" id="2.30.30.30:FF:000001">
    <property type="entry name" value="50S ribosomal protein L2"/>
    <property type="match status" value="1"/>
</dbReference>
<dbReference type="FunFam" id="2.40.50.140:FF:000003">
    <property type="entry name" value="50S ribosomal protein L2"/>
    <property type="match status" value="1"/>
</dbReference>
<dbReference type="FunFam" id="4.10.950.10:FF:000001">
    <property type="entry name" value="50S ribosomal protein L2"/>
    <property type="match status" value="1"/>
</dbReference>
<dbReference type="Gene3D" id="2.30.30.30">
    <property type="match status" value="1"/>
</dbReference>
<dbReference type="Gene3D" id="2.40.50.140">
    <property type="entry name" value="Nucleic acid-binding proteins"/>
    <property type="match status" value="1"/>
</dbReference>
<dbReference type="Gene3D" id="4.10.950.10">
    <property type="entry name" value="Ribosomal protein L2, domain 3"/>
    <property type="match status" value="1"/>
</dbReference>
<dbReference type="HAMAP" id="MF_01320_B">
    <property type="entry name" value="Ribosomal_uL2_B"/>
    <property type="match status" value="1"/>
</dbReference>
<dbReference type="InterPro" id="IPR012340">
    <property type="entry name" value="NA-bd_OB-fold"/>
</dbReference>
<dbReference type="InterPro" id="IPR014722">
    <property type="entry name" value="Rib_uL2_dom2"/>
</dbReference>
<dbReference type="InterPro" id="IPR002171">
    <property type="entry name" value="Ribosomal_uL2"/>
</dbReference>
<dbReference type="InterPro" id="IPR005880">
    <property type="entry name" value="Ribosomal_uL2_bac/org-type"/>
</dbReference>
<dbReference type="InterPro" id="IPR022669">
    <property type="entry name" value="Ribosomal_uL2_C"/>
</dbReference>
<dbReference type="InterPro" id="IPR022671">
    <property type="entry name" value="Ribosomal_uL2_CS"/>
</dbReference>
<dbReference type="InterPro" id="IPR014726">
    <property type="entry name" value="Ribosomal_uL2_dom3"/>
</dbReference>
<dbReference type="InterPro" id="IPR022666">
    <property type="entry name" value="Ribosomal_uL2_RNA-bd_dom"/>
</dbReference>
<dbReference type="InterPro" id="IPR008991">
    <property type="entry name" value="Translation_prot_SH3-like_sf"/>
</dbReference>
<dbReference type="NCBIfam" id="TIGR01171">
    <property type="entry name" value="rplB_bact"/>
    <property type="match status" value="1"/>
</dbReference>
<dbReference type="PANTHER" id="PTHR13691:SF5">
    <property type="entry name" value="LARGE RIBOSOMAL SUBUNIT PROTEIN UL2M"/>
    <property type="match status" value="1"/>
</dbReference>
<dbReference type="PANTHER" id="PTHR13691">
    <property type="entry name" value="RIBOSOMAL PROTEIN L2"/>
    <property type="match status" value="1"/>
</dbReference>
<dbReference type="Pfam" id="PF00181">
    <property type="entry name" value="Ribosomal_L2"/>
    <property type="match status" value="1"/>
</dbReference>
<dbReference type="Pfam" id="PF03947">
    <property type="entry name" value="Ribosomal_L2_C"/>
    <property type="match status" value="1"/>
</dbReference>
<dbReference type="PIRSF" id="PIRSF002158">
    <property type="entry name" value="Ribosomal_L2"/>
    <property type="match status" value="1"/>
</dbReference>
<dbReference type="SMART" id="SM01383">
    <property type="entry name" value="Ribosomal_L2"/>
    <property type="match status" value="1"/>
</dbReference>
<dbReference type="SMART" id="SM01382">
    <property type="entry name" value="Ribosomal_L2_C"/>
    <property type="match status" value="1"/>
</dbReference>
<dbReference type="SUPFAM" id="SSF50249">
    <property type="entry name" value="Nucleic acid-binding proteins"/>
    <property type="match status" value="1"/>
</dbReference>
<dbReference type="SUPFAM" id="SSF50104">
    <property type="entry name" value="Translation proteins SH3-like domain"/>
    <property type="match status" value="1"/>
</dbReference>
<dbReference type="PROSITE" id="PS00467">
    <property type="entry name" value="RIBOSOMAL_L2"/>
    <property type="match status" value="1"/>
</dbReference>